<keyword id="KW-0131">Cell cycle</keyword>
<keyword id="KW-0132">Cell division</keyword>
<keyword id="KW-0238">DNA-binding</keyword>
<protein>
    <recommendedName>
        <fullName evidence="1">Probable cell division protein WhiA</fullName>
    </recommendedName>
</protein>
<name>WHIA_BACC7</name>
<feature type="chain" id="PRO_0000376429" description="Probable cell division protein WhiA">
    <location>
        <begin position="1"/>
        <end position="316"/>
    </location>
</feature>
<feature type="DNA-binding region" description="H-T-H motif" evidence="1">
    <location>
        <begin position="275"/>
        <end position="309"/>
    </location>
</feature>
<sequence>MSFASETKKELTNLEMKECCEKAELSALLRMNGSLSFSNRRLSIDIQTENAAIARRIYTLLKKGYDVTVELLVRKKMRLKKNNVYIVRLVEKSREILADLHIVRDDFSFIRNISQELIEKKCCKRSYLRGAFLAGGSVNNPETSSYHLEIFSLYKEHNDAICELMNGFDLNSKTLERRKGYITYLKEAEKITEFLNIIGAHNALLRFEDIRIVRDMRNSVNRLVNCETANLNKTIGAALRQIENIRYIDETVGLDILPDKLREIAQLRRDYQDVTLKELGEMVSGGKISKSGINHRLRKIDDIAEKLRAGETVAKK</sequence>
<accession>B7HW81</accession>
<evidence type="ECO:0000255" key="1">
    <source>
        <dbReference type="HAMAP-Rule" id="MF_01420"/>
    </source>
</evidence>
<comment type="function">
    <text evidence="1">Involved in cell division and chromosome segregation.</text>
</comment>
<comment type="similarity">
    <text evidence="1">Belongs to the WhiA family.</text>
</comment>
<dbReference type="EMBL" id="CP001177">
    <property type="protein sequence ID" value="ACJ80013.1"/>
    <property type="molecule type" value="Genomic_DNA"/>
</dbReference>
<dbReference type="SMR" id="B7HW81"/>
<dbReference type="KEGG" id="bcr:BCAH187_A5314"/>
<dbReference type="HOGENOM" id="CLU_053282_0_0_9"/>
<dbReference type="Proteomes" id="UP000002214">
    <property type="component" value="Chromosome"/>
</dbReference>
<dbReference type="GO" id="GO:0003677">
    <property type="term" value="F:DNA binding"/>
    <property type="evidence" value="ECO:0007669"/>
    <property type="project" value="UniProtKB-UniRule"/>
</dbReference>
<dbReference type="GO" id="GO:0051301">
    <property type="term" value="P:cell division"/>
    <property type="evidence" value="ECO:0007669"/>
    <property type="project" value="UniProtKB-UniRule"/>
</dbReference>
<dbReference type="GO" id="GO:0043937">
    <property type="term" value="P:regulation of sporulation"/>
    <property type="evidence" value="ECO:0007669"/>
    <property type="project" value="InterPro"/>
</dbReference>
<dbReference type="FunFam" id="3.10.28.10:FF:000002">
    <property type="entry name" value="Probable cell division protein WhiA"/>
    <property type="match status" value="1"/>
</dbReference>
<dbReference type="Gene3D" id="3.10.28.10">
    <property type="entry name" value="Homing endonucleases"/>
    <property type="match status" value="1"/>
</dbReference>
<dbReference type="HAMAP" id="MF_01420">
    <property type="entry name" value="HTH_type_WhiA"/>
    <property type="match status" value="1"/>
</dbReference>
<dbReference type="InterPro" id="IPR027434">
    <property type="entry name" value="Homing_endonucl"/>
</dbReference>
<dbReference type="InterPro" id="IPR018478">
    <property type="entry name" value="Sporu_reg_WhiA_N_dom"/>
</dbReference>
<dbReference type="InterPro" id="IPR003802">
    <property type="entry name" value="Sporulation_regulator_WhiA"/>
</dbReference>
<dbReference type="InterPro" id="IPR023054">
    <property type="entry name" value="Sporulation_regulator_WhiA_C"/>
</dbReference>
<dbReference type="InterPro" id="IPR039518">
    <property type="entry name" value="WhiA_LAGLIDADG_dom"/>
</dbReference>
<dbReference type="NCBIfam" id="TIGR00647">
    <property type="entry name" value="DNA_bind_WhiA"/>
    <property type="match status" value="1"/>
</dbReference>
<dbReference type="PANTHER" id="PTHR37307">
    <property type="entry name" value="CELL DIVISION PROTEIN WHIA-RELATED"/>
    <property type="match status" value="1"/>
</dbReference>
<dbReference type="PANTHER" id="PTHR37307:SF1">
    <property type="entry name" value="CELL DIVISION PROTEIN WHIA-RELATED"/>
    <property type="match status" value="1"/>
</dbReference>
<dbReference type="Pfam" id="PF02650">
    <property type="entry name" value="HTH_WhiA"/>
    <property type="match status" value="1"/>
</dbReference>
<dbReference type="Pfam" id="PF14527">
    <property type="entry name" value="LAGLIDADG_WhiA"/>
    <property type="match status" value="1"/>
</dbReference>
<dbReference type="Pfam" id="PF10298">
    <property type="entry name" value="WhiA_N"/>
    <property type="match status" value="1"/>
</dbReference>
<dbReference type="SUPFAM" id="SSF55608">
    <property type="entry name" value="Homing endonucleases"/>
    <property type="match status" value="1"/>
</dbReference>
<organism>
    <name type="scientific">Bacillus cereus (strain AH187)</name>
    <dbReference type="NCBI Taxonomy" id="405534"/>
    <lineage>
        <taxon>Bacteria</taxon>
        <taxon>Bacillati</taxon>
        <taxon>Bacillota</taxon>
        <taxon>Bacilli</taxon>
        <taxon>Bacillales</taxon>
        <taxon>Bacillaceae</taxon>
        <taxon>Bacillus</taxon>
        <taxon>Bacillus cereus group</taxon>
    </lineage>
</organism>
<proteinExistence type="inferred from homology"/>
<reference key="1">
    <citation type="submission" date="2008-10" db="EMBL/GenBank/DDBJ databases">
        <title>Genome sequence of Bacillus cereus AH187.</title>
        <authorList>
            <person name="Dodson R.J."/>
            <person name="Durkin A.S."/>
            <person name="Rosovitz M.J."/>
            <person name="Rasko D.A."/>
            <person name="Kolsto A.B."/>
            <person name="Okstad O.A."/>
            <person name="Ravel J."/>
            <person name="Sutton G."/>
        </authorList>
    </citation>
    <scope>NUCLEOTIDE SEQUENCE [LARGE SCALE GENOMIC DNA]</scope>
    <source>
        <strain>AH187</strain>
    </source>
</reference>
<gene>
    <name evidence="1" type="primary">whiA</name>
    <name type="ordered locus">BCAH187_A5314</name>
</gene>